<name>GAG_HV1S9</name>
<accession>Q9WC62</accession>
<keyword id="KW-0002">3D-structure</keyword>
<keyword id="KW-0014">AIDS</keyword>
<keyword id="KW-0167">Capsid protein</keyword>
<keyword id="KW-1032">Host cell membrane</keyword>
<keyword id="KW-1035">Host cytoplasm</keyword>
<keyword id="KW-1039">Host endosome</keyword>
<keyword id="KW-1043">Host membrane</keyword>
<keyword id="KW-1048">Host nucleus</keyword>
<keyword id="KW-0945">Host-virus interaction</keyword>
<keyword id="KW-0449">Lipoprotein</keyword>
<keyword id="KW-0472">Membrane</keyword>
<keyword id="KW-0479">Metal-binding</keyword>
<keyword id="KW-0488">Methylation</keyword>
<keyword id="KW-0519">Myristate</keyword>
<keyword id="KW-0597">Phosphoprotein</keyword>
<keyword id="KW-0677">Repeat</keyword>
<keyword id="KW-0688">Ribosomal frameshifting</keyword>
<keyword id="KW-0694">RNA-binding</keyword>
<keyword id="KW-1198">Viral budding</keyword>
<keyword id="KW-1187">Viral budding via the host ESCRT complexes</keyword>
<keyword id="KW-0543">Viral nucleoprotein</keyword>
<keyword id="KW-1188">Viral release from host cell</keyword>
<keyword id="KW-0946">Virion</keyword>
<keyword id="KW-0862">Zinc</keyword>
<keyword id="KW-0863">Zinc-finger</keyword>
<feature type="initiator methionine" description="Removed; by host" evidence="1">
    <location>
        <position position="1"/>
    </location>
</feature>
<feature type="chain" id="PRO_0000261230" description="Gag polyprotein">
    <location>
        <begin position="2"/>
        <end position="497"/>
    </location>
</feature>
<feature type="chain" id="PRO_0000246398" description="Matrix protein p17" evidence="1">
    <location>
        <begin position="2"/>
        <end position="132"/>
    </location>
</feature>
<feature type="chain" id="PRO_0000246399" description="Capsid protein p24" evidence="1">
    <location>
        <begin position="133"/>
        <end position="363"/>
    </location>
</feature>
<feature type="peptide" id="PRO_0000246400" description="Spacer peptide 1" evidence="1">
    <location>
        <begin position="364"/>
        <end position="376"/>
    </location>
</feature>
<feature type="chain" id="PRO_0000246401" description="Nucleocapsid protein p7" evidence="1">
    <location>
        <begin position="377"/>
        <end position="431"/>
    </location>
</feature>
<feature type="peptide" id="PRO_0000246402" description="Spacer peptide 2" evidence="1">
    <location>
        <begin position="432"/>
        <end position="447"/>
    </location>
</feature>
<feature type="chain" id="PRO_0000246403" description="p6-gag" evidence="1">
    <location>
        <begin position="448"/>
        <end position="497"/>
    </location>
</feature>
<feature type="zinc finger region" description="CCHC-type 1" evidence="8">
    <location>
        <begin position="389"/>
        <end position="406"/>
    </location>
</feature>
<feature type="zinc finger region" description="CCHC-type 2" evidence="8">
    <location>
        <begin position="410"/>
        <end position="427"/>
    </location>
</feature>
<feature type="region of interest" description="Interaction with Gp41" evidence="6">
    <location>
        <begin position="7"/>
        <end position="31"/>
    </location>
</feature>
<feature type="region of interest" description="Interaction with host CALM1" evidence="5">
    <location>
        <begin position="8"/>
        <end position="43"/>
    </location>
</feature>
<feature type="region of interest" description="Interaction with host AP3D1" evidence="7">
    <location>
        <begin position="12"/>
        <end position="19"/>
    </location>
</feature>
<feature type="region of interest" description="Interaction with membrane phosphatidylinositol 4,5-bisphosphate and RNA" evidence="6">
    <location>
        <begin position="14"/>
        <end position="33"/>
    </location>
</feature>
<feature type="region of interest" description="Interaction with membrane phosphatidylinositol 4,5-bisphosphate" evidence="6">
    <location>
        <begin position="73"/>
        <end position="77"/>
    </location>
</feature>
<feature type="region of interest" description="Interaction with host PPIA/CYPA and NUP153" evidence="6">
    <location>
        <begin position="189"/>
        <end position="227"/>
    </location>
</feature>
<feature type="region of interest" description="PPIA/CYPA-binding loop" evidence="5">
    <location>
        <begin position="217"/>
        <end position="225"/>
    </location>
</feature>
<feature type="region of interest" description="Dimerization/Multimerization of capsid protein p24" evidence="5">
    <location>
        <begin position="277"/>
        <end position="363"/>
    </location>
</feature>
<feature type="region of interest" description="Disordered" evidence="9">
    <location>
        <begin position="436"/>
        <end position="497"/>
    </location>
</feature>
<feature type="short sequence motif" description="Nuclear export signal" evidence="1">
    <location>
        <begin position="16"/>
        <end position="22"/>
    </location>
</feature>
<feature type="short sequence motif" description="Nuclear localization signal" evidence="1">
    <location>
        <begin position="26"/>
        <end position="32"/>
    </location>
</feature>
<feature type="short sequence motif" description="PTAP/PSAP motif">
    <location>
        <begin position="454"/>
        <end position="457"/>
    </location>
</feature>
<feature type="short sequence motif" description="LYPX(n)L motif">
    <location>
        <begin position="480"/>
        <end position="489"/>
    </location>
</feature>
<feature type="site" description="Cleavage; by viral protease" evidence="1">
    <location>
        <begin position="132"/>
        <end position="133"/>
    </location>
</feature>
<feature type="site" description="Cleavage; by viral protease" evidence="1">
    <location>
        <begin position="363"/>
        <end position="364"/>
    </location>
</feature>
<feature type="site" description="Cleavage; by viral protease" evidence="1">
    <location>
        <begin position="376"/>
        <end position="377"/>
    </location>
</feature>
<feature type="site" description="Cleavage; by viral protease" evidence="1">
    <location>
        <begin position="431"/>
        <end position="432"/>
    </location>
</feature>
<feature type="site" description="Cleavage; by viral protease" evidence="1">
    <location>
        <begin position="447"/>
        <end position="448"/>
    </location>
</feature>
<feature type="modified residue" description="Phosphoserine; by host MAPK1" evidence="6">
    <location>
        <position position="148"/>
    </location>
</feature>
<feature type="modified residue" description="Asymmetric dimethylarginine; in Nucleocapsid protein p7; by host PRMT6" evidence="1">
    <location>
        <position position="408"/>
    </location>
</feature>
<feature type="lipid moiety-binding region" description="N-myristoyl glycine; by host" evidence="1">
    <location>
        <position position="2"/>
    </location>
</feature>
<feature type="helix" evidence="11">
    <location>
        <begin position="483"/>
        <end position="487"/>
    </location>
</feature>
<comment type="function">
    <molecule>Gag polyprotein</molecule>
    <text evidence="5">Mediates, with Gag-Pol polyprotein, the essential events in virion assembly, including binding the plasma membrane, making the protein-protein interactions necessary to create spherical particles, recruiting the viral Env proteins, and packaging the genomic RNA via direct interactions with the RNA packaging sequence (Psi).</text>
</comment>
<comment type="function">
    <molecule>Matrix protein p17</molecule>
    <text evidence="1 6">Targets the polyprotein to the plasma membrane via a multipartite membrane-binding signal, that includes its myristoylated N-terminus (By similarity). Matrix protein is part of the pre-integration complex. Implicated in the release from host cell mediated by Vpu. Binds to RNA (By similarity).</text>
</comment>
<comment type="function">
    <molecule>Capsid protein p24</molecule>
    <text evidence="5 6">Forms the conical core that encapsulates the genomic RNA-nucleocapsid complex in the virion. Most core are conical, with only 7% tubular. The core is constituted by capsid protein hexamer subunits. The core is disassembled soon after virion entry (By similarity). The capsid promotes immune invasion by cloaking viral DNA from CGAS detection (By similarity). Host restriction factors such as TRIM5-alpha or TRIMCyp bind retroviral capsids and cause premature capsid disassembly, leading to blocks in reverse transcription. Capsid restriction by TRIM5 is one of the factors which restricts HIV-1 to the human species. Host PIN1 apparently facilitates the virion uncoating (By similarity). On the other hand, interactions with PDZD8 or CYPA stabilize the capsid (By similarity).</text>
</comment>
<comment type="function">
    <molecule>Nucleocapsid protein p7</molecule>
    <text evidence="5">Encapsulates and protects viral dimeric unspliced genomic RNA (gRNA). Binds these RNAs through its zinc fingers. Acts as a nucleic acid chaperone which is involved in rearangement of nucleic acid secondary structure during gRNA retrotranscription. Also facilitates template switch leading to recombination. As part of the polyprotein, participates in gRNA dimerization, packaging, tRNA incorporation and virion assembly.</text>
</comment>
<comment type="function">
    <molecule>p6-gag</molecule>
    <text evidence="6">Plays a role in budding of the assembled particle by interacting with the host class E VPS proteins TSG101 and PDCD6IP/AIP1.</text>
</comment>
<comment type="subunit">
    <molecule>Gag polyprotein</molecule>
    <text evidence="4 5">Homotrimer; further assembles as hexamers of trimers. Oligomerization possibly creates a central hole into which the cytoplasmic tail of the gp41 envelope protein may be inserted. Interacts with host TRIM22; this interaction seems to disrupt proper trafficking of Gag polyprotein and may interfere with budding. Interacts with host PDZD8. When ubiquitinated, interacts (via p6-gag domain) with host PACSIN2; this interaction allows PACSIN2 recruitment to viral assembly sites and its subsequent incorporation into virions. Interacts with MOV10 (By similarity).</text>
</comment>
<comment type="subunit">
    <molecule>Matrix protein p17</molecule>
    <text evidence="5 6">Homotrimer; further assembles as hexamers of trimers. Interacts with gp41 (via C-terminus). Interacts with host CALM1; this interaction induces a conformational change in the Matrix protein, triggering exposure of the myristate group. Interacts with host AP3D1; this interaction allows the polyprotein trafficking to multivesicular bodies during virus assembly. Part of the pre-integration complex (PIC) which is composed of viral genome, matrix protein, Vpr and integrase.</text>
</comment>
<comment type="subunit">
    <molecule>Capsid protein p24</molecule>
    <text evidence="5 6">Homodimer; the homodimer further multimerizes as homohexamers or homopentamers (By similarity). Interacts with host NUP98 (By similarity). Interacts with host PPIA/CYPA; this interaction stabilizes the capsid (By similarity). Interacts with host NUP153 (By similarity). Interacts with host PDZD8; this interaction stabilizes the capsid. Interacts with host TRIM5; this interaction destabilizes the capsid (By similarity). Interacts with host CPSF6 (By similarity). Interacts with host NONO; the interaction is weak (By similarity).</text>
</comment>
<comment type="subunit">
    <molecule>Nucleocapsid protein p7</molecule>
    <text evidence="6">Interacts with host NUP98.</text>
</comment>
<comment type="subunit">
    <molecule>p6-gag</molecule>
    <text evidence="3 6">Interacts with Vpr; this interaction allows Vpr incorporation into the virion. Interacts with host TSG101. p6-gag interacts with host PDCD6IP/AIP1.</text>
</comment>
<comment type="subcellular location">
    <molecule>Gag polyprotein</molecule>
    <subcellularLocation>
        <location evidence="6">Host cell membrane</location>
        <topology evidence="6">Lipid-anchor</topology>
    </subcellularLocation>
    <subcellularLocation>
        <location evidence="6">Host endosome</location>
        <location evidence="6">Host multivesicular body</location>
    </subcellularLocation>
    <text evidence="6">These locations are probably linked to virus assembly sites. The main location is the cell membrane, but under some circumstances, late endosomal compartments can serve as productive sites for virion assembly.</text>
</comment>
<comment type="subcellular location">
    <molecule>Matrix protein p17</molecule>
    <subcellularLocation>
        <location evidence="6">Virion membrane</location>
        <topology evidence="6">Lipid-anchor</topology>
    </subcellularLocation>
    <subcellularLocation>
        <location evidence="1">Host nucleus</location>
    </subcellularLocation>
    <subcellularLocation>
        <location evidence="1">Host cytoplasm</location>
    </subcellularLocation>
</comment>
<comment type="subcellular location">
    <molecule>Capsid protein p24</molecule>
    <subcellularLocation>
        <location evidence="6">Virion</location>
    </subcellularLocation>
</comment>
<comment type="subcellular location">
    <molecule>Nucleocapsid protein p7</molecule>
    <subcellularLocation>
        <location evidence="6">Virion</location>
    </subcellularLocation>
</comment>
<comment type="alternative products">
    <event type="ribosomal frameshifting"/>
    <isoform>
        <id>Q9WC62-1</id>
        <name>Gag polyprotein</name>
        <sequence type="displayed"/>
    </isoform>
    <isoform>
        <id>Q9WC63-1</id>
        <name>Gag-Pol polyprotein</name>
        <sequence type="external"/>
    </isoform>
    <text>Translation results in the formation of the Gag polyprotein most of the time. Ribosomal frameshifting at the gag-pol genes boundary occurs at low frequency and produces the Gag-Pol polyprotein. This strategy of translation probably allows the virus to modulate the quantity of each viral protein. Maintenance of a correct Gag to Gag-Pol ratio is essential for RNA dimerization and viral infectivity.</text>
</comment>
<comment type="domain">
    <text evidence="6">Late-budding domains (L domains) are short sequence motifs essential for viral particle budding. They recruit proteins of the host ESCRT machinery (Endosomal Sorting Complex Required for Transport) or ESCRT-associated proteins. p6-gag contains two L domains: a PTAP/PSAP motif, which interacts with the UEV domain of TSG101 and a LYPX(n)L motif which interacts with PDCD6IP/AIP1.</text>
</comment>
<comment type="PTM">
    <text evidence="6">Gag-Pol polyprotein: Specific enzymatic cleavages by the viral protease yield mature proteins.</text>
</comment>
<comment type="PTM">
    <molecule>Matrix protein p17</molecule>
    <text evidence="5">Tyrosine phosphorylated presumably in the virion by a host kinase. Phosphorylation is apparently not a major regulator of membrane association.</text>
</comment>
<comment type="PTM">
    <text evidence="6">Capsid protein p24 is phosphorylated possibly by host MAPK1; this phosphorylation is necessary for Pin1-mediated virion uncoating.</text>
</comment>
<comment type="PTM">
    <text evidence="2">Nucleocapsid protein p7 is methylated by host PRMT6, impairing its function by reducing RNA annealing and the initiation of reverse transcription.</text>
</comment>
<comment type="miscellaneous">
    <text>HIV-1 lineages are divided in three main groups, M (for Major), O (for Outlier), and N (for New, or Non-M, Non-O). The vast majority of strains found worldwide belong to the group M. Group O seems to be endemic to and largely confined to Cameroon and neighboring countries in West Central Africa, where these viruses represent a small minority of HIV-1 strains. The group N is represented by a limited number of isolates from Cameroonian persons. The group M is further subdivided in 9 clades or subtypes (A to D, F to H, J and K).</text>
</comment>
<comment type="miscellaneous">
    <molecule>Isoform Gag polyprotein</molecule>
    <text>Produced by conventional translation.</text>
</comment>
<comment type="similarity">
    <text evidence="10">Belongs to the primate lentivirus group gag polyprotein family.</text>
</comment>
<sequence>MGARASILSGGKLDDWEKIRLRPGGKKQYRIKHLVWASRELDRFALNPGLLESAKGCQQILVQLQPALQTGTEEIKSLYNTVATLYCVHQRIEIKDTKEALDKIEEIQNKNKQQTQKAETDKKDNSQVSQNYPIVQNLQGQPVHQALSPRTLNAWVKVIEEKAFSPEVIPMFSALSEGATPQDLNTMLNTIGGHQAAMQMLKDTINEEAAEWDRVHPVHAGPVAPGQVREPRGSDIAGTTSNLQEQIGWMTGNPPIPVGEIYKRWIILGLNKIVRMYSPVSILDIRQGPKEPFRDYVDRFFKALRAEQATQDVKNWMTDTLLVQNANPDCKTILKALGSGATLEEMMTACQGVGGPGHKARVLAEAMSQVTNTNIMMQRGNFRDHKRIVKCFNCGKQGHIAKNCRAPRKKGCWKCGKEGHQMKDCTERQANFLGKIWPSSKGRPGNFLQSRPEPTAPPAESLGFGEEIPSPKQEPKDKELYPLTSLRSLFGSDPLSQ</sequence>
<dbReference type="EMBL" id="AF082395">
    <property type="protein sequence ID" value="AAD17765.1"/>
    <property type="molecule type" value="Genomic_DNA"/>
</dbReference>
<dbReference type="PDB" id="2R02">
    <property type="method" value="X-ray"/>
    <property type="resolution" value="2.60 A"/>
    <property type="chains" value="B=479-489"/>
</dbReference>
<dbReference type="PDBsum" id="2R02"/>
<dbReference type="SMR" id="Q9WC62"/>
<dbReference type="EvolutionaryTrace" id="Q9WC62"/>
<dbReference type="PRO" id="PR:Q9WC62"/>
<dbReference type="Proteomes" id="UP000123434">
    <property type="component" value="Segment"/>
</dbReference>
<dbReference type="GO" id="GO:0042025">
    <property type="term" value="C:host cell nucleus"/>
    <property type="evidence" value="ECO:0007669"/>
    <property type="project" value="UniProtKB-SubCell"/>
</dbReference>
<dbReference type="GO" id="GO:0020002">
    <property type="term" value="C:host cell plasma membrane"/>
    <property type="evidence" value="ECO:0007669"/>
    <property type="project" value="UniProtKB-SubCell"/>
</dbReference>
<dbReference type="GO" id="GO:0072494">
    <property type="term" value="C:host multivesicular body"/>
    <property type="evidence" value="ECO:0007669"/>
    <property type="project" value="UniProtKB-SubCell"/>
</dbReference>
<dbReference type="GO" id="GO:0016020">
    <property type="term" value="C:membrane"/>
    <property type="evidence" value="ECO:0007669"/>
    <property type="project" value="UniProtKB-KW"/>
</dbReference>
<dbReference type="GO" id="GO:0019013">
    <property type="term" value="C:viral nucleocapsid"/>
    <property type="evidence" value="ECO:0007669"/>
    <property type="project" value="UniProtKB-KW"/>
</dbReference>
<dbReference type="GO" id="GO:0055036">
    <property type="term" value="C:virion membrane"/>
    <property type="evidence" value="ECO:0007669"/>
    <property type="project" value="UniProtKB-SubCell"/>
</dbReference>
<dbReference type="GO" id="GO:0003723">
    <property type="term" value="F:RNA binding"/>
    <property type="evidence" value="ECO:0007669"/>
    <property type="project" value="UniProtKB-KW"/>
</dbReference>
<dbReference type="GO" id="GO:0005198">
    <property type="term" value="F:structural molecule activity"/>
    <property type="evidence" value="ECO:0007669"/>
    <property type="project" value="InterPro"/>
</dbReference>
<dbReference type="GO" id="GO:0008270">
    <property type="term" value="F:zinc ion binding"/>
    <property type="evidence" value="ECO:0007669"/>
    <property type="project" value="UniProtKB-KW"/>
</dbReference>
<dbReference type="GO" id="GO:0039702">
    <property type="term" value="P:viral budding via host ESCRT complex"/>
    <property type="evidence" value="ECO:0007669"/>
    <property type="project" value="UniProtKB-KW"/>
</dbReference>
<dbReference type="GO" id="GO:0075523">
    <property type="term" value="P:viral translational frameshifting"/>
    <property type="evidence" value="ECO:0007669"/>
    <property type="project" value="UniProtKB-KW"/>
</dbReference>
<dbReference type="FunFam" id="1.10.1200.30:FF:000001">
    <property type="entry name" value="Gag polyprotein"/>
    <property type="match status" value="1"/>
</dbReference>
<dbReference type="FunFam" id="1.10.375.10:FF:000001">
    <property type="entry name" value="Gag polyprotein"/>
    <property type="match status" value="1"/>
</dbReference>
<dbReference type="FunFam" id="4.10.60.10:FF:000001">
    <property type="entry name" value="Gag polyprotein"/>
    <property type="match status" value="1"/>
</dbReference>
<dbReference type="Gene3D" id="1.10.1200.30">
    <property type="match status" value="1"/>
</dbReference>
<dbReference type="Gene3D" id="6.10.250.390">
    <property type="match status" value="1"/>
</dbReference>
<dbReference type="Gene3D" id="1.10.375.10">
    <property type="entry name" value="Human Immunodeficiency Virus Type 1 Capsid Protein"/>
    <property type="match status" value="1"/>
</dbReference>
<dbReference type="Gene3D" id="1.10.150.90">
    <property type="entry name" value="Immunodeficiency lentiviruses, gag gene matrix protein p17"/>
    <property type="match status" value="1"/>
</dbReference>
<dbReference type="Gene3D" id="1.20.5.760">
    <property type="entry name" value="Single helix bin"/>
    <property type="match status" value="1"/>
</dbReference>
<dbReference type="Gene3D" id="4.10.60.10">
    <property type="entry name" value="Zinc finger, CCHC-type"/>
    <property type="match status" value="1"/>
</dbReference>
<dbReference type="InterPro" id="IPR045345">
    <property type="entry name" value="Gag_p24_C"/>
</dbReference>
<dbReference type="InterPro" id="IPR014817">
    <property type="entry name" value="Gag_p6"/>
</dbReference>
<dbReference type="InterPro" id="IPR000071">
    <property type="entry name" value="Lentvrl_matrix_N"/>
</dbReference>
<dbReference type="InterPro" id="IPR012344">
    <property type="entry name" value="Matrix_HIV/RSV_N"/>
</dbReference>
<dbReference type="InterPro" id="IPR050195">
    <property type="entry name" value="Primate_lentivir_Gag_pol-like"/>
</dbReference>
<dbReference type="InterPro" id="IPR008916">
    <property type="entry name" value="Retrov_capsid_C"/>
</dbReference>
<dbReference type="InterPro" id="IPR008919">
    <property type="entry name" value="Retrov_capsid_N"/>
</dbReference>
<dbReference type="InterPro" id="IPR010999">
    <property type="entry name" value="Retrovr_matrix"/>
</dbReference>
<dbReference type="InterPro" id="IPR001878">
    <property type="entry name" value="Znf_CCHC"/>
</dbReference>
<dbReference type="InterPro" id="IPR036875">
    <property type="entry name" value="Znf_CCHC_sf"/>
</dbReference>
<dbReference type="PANTHER" id="PTHR40389:SF4">
    <property type="match status" value="1"/>
</dbReference>
<dbReference type="PANTHER" id="PTHR40389">
    <property type="entry name" value="ENDOGENOUS RETROVIRUS GROUP K MEMBER 24 GAG POLYPROTEIN-RELATED"/>
    <property type="match status" value="1"/>
</dbReference>
<dbReference type="Pfam" id="PF00540">
    <property type="entry name" value="Gag_p17"/>
    <property type="match status" value="1"/>
</dbReference>
<dbReference type="Pfam" id="PF19317">
    <property type="entry name" value="Gag_p24_C"/>
    <property type="match status" value="1"/>
</dbReference>
<dbReference type="Pfam" id="PF08705">
    <property type="entry name" value="Gag_p6"/>
    <property type="match status" value="1"/>
</dbReference>
<dbReference type="Pfam" id="PF00098">
    <property type="entry name" value="zf-CCHC"/>
    <property type="match status" value="2"/>
</dbReference>
<dbReference type="PRINTS" id="PR00234">
    <property type="entry name" value="HIV1MATRIX"/>
</dbReference>
<dbReference type="SMART" id="SM00343">
    <property type="entry name" value="ZnF_C2HC"/>
    <property type="match status" value="2"/>
</dbReference>
<dbReference type="SUPFAM" id="SSF47836">
    <property type="entry name" value="Retroviral matrix proteins"/>
    <property type="match status" value="1"/>
</dbReference>
<dbReference type="SUPFAM" id="SSF47353">
    <property type="entry name" value="Retrovirus capsid dimerization domain-like"/>
    <property type="match status" value="1"/>
</dbReference>
<dbReference type="SUPFAM" id="SSF47943">
    <property type="entry name" value="Retrovirus capsid protein, N-terminal core domain"/>
    <property type="match status" value="1"/>
</dbReference>
<dbReference type="SUPFAM" id="SSF57756">
    <property type="entry name" value="Retrovirus zinc finger-like domains"/>
    <property type="match status" value="1"/>
</dbReference>
<dbReference type="PROSITE" id="PS50158">
    <property type="entry name" value="ZF_CCHC"/>
    <property type="match status" value="2"/>
</dbReference>
<reference key="1">
    <citation type="journal article" date="1999" name="AIDS Res. Hum. Retroviruses">
        <title>Virtually full-length sequences of HIV type 1 subtype J reference strains.</title>
        <authorList>
            <person name="Laukkanen T."/>
            <person name="Albert J."/>
            <person name="Liitsola K."/>
            <person name="Green S.D."/>
            <person name="Carr J.K."/>
            <person name="Leitner T."/>
            <person name="McCutchan F.E."/>
            <person name="Salminen M.O."/>
        </authorList>
    </citation>
    <scope>NUCLEOTIDE SEQUENCE [GENOMIC DNA]</scope>
</reference>
<evidence type="ECO:0000250" key="1"/>
<evidence type="ECO:0000250" key="2">
    <source>
        <dbReference type="UniProtKB" id="P03347"/>
    </source>
</evidence>
<evidence type="ECO:0000250" key="3">
    <source>
        <dbReference type="UniProtKB" id="P03348"/>
    </source>
</evidence>
<evidence type="ECO:0000250" key="4">
    <source>
        <dbReference type="UniProtKB" id="P03349"/>
    </source>
</evidence>
<evidence type="ECO:0000250" key="5">
    <source>
        <dbReference type="UniProtKB" id="P04591"/>
    </source>
</evidence>
<evidence type="ECO:0000250" key="6">
    <source>
        <dbReference type="UniProtKB" id="P12493"/>
    </source>
</evidence>
<evidence type="ECO:0000250" key="7">
    <source>
        <dbReference type="UniProtKB" id="P12497"/>
    </source>
</evidence>
<evidence type="ECO:0000255" key="8">
    <source>
        <dbReference type="PROSITE-ProRule" id="PRU00047"/>
    </source>
</evidence>
<evidence type="ECO:0000256" key="9">
    <source>
        <dbReference type="SAM" id="MobiDB-lite"/>
    </source>
</evidence>
<evidence type="ECO:0000305" key="10"/>
<evidence type="ECO:0007829" key="11">
    <source>
        <dbReference type="PDB" id="2R02"/>
    </source>
</evidence>
<proteinExistence type="evidence at protein level"/>
<organismHost>
    <name type="scientific">Homo sapiens</name>
    <name type="common">Human</name>
    <dbReference type="NCBI Taxonomy" id="9606"/>
</organismHost>
<protein>
    <recommendedName>
        <fullName>Gag polyprotein</fullName>
    </recommendedName>
    <alternativeName>
        <fullName>Pr55Gag</fullName>
    </alternativeName>
    <component>
        <recommendedName>
            <fullName>Matrix protein p17</fullName>
            <shortName>MA</shortName>
        </recommendedName>
    </component>
    <component>
        <recommendedName>
            <fullName>Capsid protein p24</fullName>
            <shortName>CA</shortName>
        </recommendedName>
    </component>
    <component>
        <recommendedName>
            <fullName evidence="6">Spacer peptide 1</fullName>
            <shortName>SP1</shortName>
        </recommendedName>
        <alternativeName>
            <fullName>p2</fullName>
        </alternativeName>
    </component>
    <component>
        <recommendedName>
            <fullName>Nucleocapsid protein p7</fullName>
            <shortName>NC</shortName>
        </recommendedName>
    </component>
    <component>
        <recommendedName>
            <fullName evidence="6">Spacer peptide 2</fullName>
            <shortName>SP2</shortName>
        </recommendedName>
        <alternativeName>
            <fullName>p1</fullName>
        </alternativeName>
    </component>
    <component>
        <recommendedName>
            <fullName>p6-gag</fullName>
        </recommendedName>
    </component>
</protein>
<gene>
    <name type="primary">gag</name>
</gene>
<organism>
    <name type="scientific">Human immunodeficiency virus type 1 group M subtype J (isolate SE9173)</name>
    <name type="common">HIV-1</name>
    <dbReference type="NCBI Taxonomy" id="388904"/>
    <lineage>
        <taxon>Viruses</taxon>
        <taxon>Riboviria</taxon>
        <taxon>Pararnavirae</taxon>
        <taxon>Artverviricota</taxon>
        <taxon>Revtraviricetes</taxon>
        <taxon>Ortervirales</taxon>
        <taxon>Retroviridae</taxon>
        <taxon>Orthoretrovirinae</taxon>
        <taxon>Lentivirus</taxon>
        <taxon>Human immunodeficiency virus type 1</taxon>
    </lineage>
</organism>